<protein>
    <recommendedName>
        <fullName>Tropomyosin</fullName>
    </recommendedName>
</protein>
<dbReference type="EMBL" id="AF534184">
    <property type="protein sequence ID" value="AAN05633.1"/>
    <property type="molecule type" value="mRNA"/>
</dbReference>
<dbReference type="SMR" id="Q8IT89"/>
<dbReference type="Allergome" id="4187">
    <property type="allergen name" value="Hae l 7"/>
</dbReference>
<dbReference type="Allergome" id="4188">
    <property type="allergen name" value="Hae l 7.0101"/>
</dbReference>
<dbReference type="FunFam" id="1.20.5.170:FF:000005">
    <property type="entry name" value="Tropomyosin alpha-1 chain"/>
    <property type="match status" value="1"/>
</dbReference>
<dbReference type="FunFam" id="1.20.5.170:FF:000001">
    <property type="entry name" value="Tropomyosin alpha-1 chain isoform 1"/>
    <property type="match status" value="1"/>
</dbReference>
<dbReference type="FunFam" id="1.20.5.340:FF:000001">
    <property type="entry name" value="Tropomyosin alpha-1 chain isoform 2"/>
    <property type="match status" value="1"/>
</dbReference>
<dbReference type="Gene3D" id="1.20.5.170">
    <property type="match status" value="2"/>
</dbReference>
<dbReference type="Gene3D" id="1.20.5.340">
    <property type="match status" value="1"/>
</dbReference>
<dbReference type="InterPro" id="IPR000533">
    <property type="entry name" value="Tropomyosin"/>
</dbReference>
<dbReference type="PANTHER" id="PTHR19269">
    <property type="entry name" value="TROPOMYOSIN"/>
    <property type="match status" value="1"/>
</dbReference>
<dbReference type="Pfam" id="PF00261">
    <property type="entry name" value="Tropomyosin"/>
    <property type="match status" value="1"/>
</dbReference>
<dbReference type="PRINTS" id="PR00194">
    <property type="entry name" value="TROPOMYOSIN"/>
</dbReference>
<dbReference type="SUPFAM" id="SSF57997">
    <property type="entry name" value="Tropomyosin"/>
    <property type="match status" value="1"/>
</dbReference>
<proteinExistence type="evidence at transcript level"/>
<organism>
    <name type="scientific">Haemaphysalis longicornis</name>
    <name type="common">Bush tick</name>
    <dbReference type="NCBI Taxonomy" id="44386"/>
    <lineage>
        <taxon>Eukaryota</taxon>
        <taxon>Metazoa</taxon>
        <taxon>Ecdysozoa</taxon>
        <taxon>Arthropoda</taxon>
        <taxon>Chelicerata</taxon>
        <taxon>Arachnida</taxon>
        <taxon>Acari</taxon>
        <taxon>Parasitiformes</taxon>
        <taxon>Ixodida</taxon>
        <taxon>Ixodoidea</taxon>
        <taxon>Ixodidae</taxon>
        <taxon>Haemaphysalinae</taxon>
        <taxon>Haemaphysalis</taxon>
    </lineage>
</organism>
<evidence type="ECO:0000250" key="1"/>
<evidence type="ECO:0000256" key="2">
    <source>
        <dbReference type="SAM" id="MobiDB-lite"/>
    </source>
</evidence>
<evidence type="ECO:0000305" key="3"/>
<feature type="chain" id="PRO_0000205680" description="Tropomyosin">
    <location>
        <begin position="1"/>
        <end position="284"/>
    </location>
</feature>
<feature type="region of interest" description="Disordered" evidence="2">
    <location>
        <begin position="1"/>
        <end position="41"/>
    </location>
</feature>
<feature type="coiled-coil region" evidence="1">
    <location>
        <begin position="1"/>
        <end position="284"/>
    </location>
</feature>
<feature type="compositionally biased region" description="Basic and acidic residues" evidence="2">
    <location>
        <begin position="12"/>
        <end position="41"/>
    </location>
</feature>
<comment type="function">
    <text evidence="1">Tropomyosin, in association with the troponin complex, plays a central role in the calcium dependent regulation of muscle contraction.</text>
</comment>
<comment type="subunit">
    <text evidence="1">Homodimer.</text>
</comment>
<comment type="domain">
    <text>The molecule is in a coiled coil structure that is formed by 2 polypeptide chains. The sequence exhibits a prominent seven-residues periodicity.</text>
</comment>
<comment type="similarity">
    <text evidence="3">Belongs to the tropomyosin family.</text>
</comment>
<name>TPM_HAELO</name>
<keyword id="KW-0175">Coiled coil</keyword>
<keyword id="KW-0677">Repeat</keyword>
<reference key="1">
    <citation type="submission" date="2002-08" db="EMBL/GenBank/DDBJ databases">
        <title>cDNA sequence encoding Haemaphysalis longicornis tropomyosin.</title>
        <authorList>
            <person name="Lee I.-Y."/>
            <person name="Jeong K.Y."/>
            <person name="Lee W.-J."/>
            <person name="Lee W.K."/>
        </authorList>
    </citation>
    <scope>NUCLEOTIDE SEQUENCE [MRNA]</scope>
</reference>
<sequence length="284" mass="32872">MDAIKKKMQAMKLEKDNAVDRAETAEQQSRDAALRAEKAEEEVRSLQKKIQQIENELDQVQEQLSQANSKLEEKDKALQAAEAEVAAHNRRIQLLEEDLERSEERLKIATQKLEEASQAADESERMRKMLEHRSITDEERMDGLEGQLKEARTMAEDADRKYDEVARKLAMVEADLERAEERAETGETKIVELEEELRVVGNNLKSLEVSEEKALQKEETYEGQIRQMTSRLQEAEARAEFAERSVQKLQKEVDRLEDELVQEKEKYKAISDELDQTFSELTGY</sequence>
<accession>Q8IT89</accession>